<keyword id="KW-0963">Cytoplasm</keyword>
<keyword id="KW-0217">Developmental protein</keyword>
<keyword id="KW-0256">Endoplasmic reticulum</keyword>
<keyword id="KW-0472">Membrane</keyword>
<keyword id="KW-0539">Nucleus</keyword>
<keyword id="KW-0812">Transmembrane</keyword>
<keyword id="KW-1133">Transmembrane helix</keyword>
<protein>
    <recommendedName>
        <fullName>Protein AUXIN-REGULATED GENE INVOLVED IN ORGAN SIZE</fullName>
        <shortName>BrARGOS</shortName>
    </recommendedName>
</protein>
<accession>C7SFP6</accession>
<accession>M4CGR1</accession>
<evidence type="ECO:0000250" key="1"/>
<evidence type="ECO:0000250" key="2">
    <source>
        <dbReference type="UniProtKB" id="Q6NMD6"/>
    </source>
</evidence>
<evidence type="ECO:0000255" key="3"/>
<evidence type="ECO:0000269" key="4">
    <source>
    </source>
</evidence>
<evidence type="ECO:0000305" key="5"/>
<proteinExistence type="evidence at transcript level"/>
<name>ARGOS_BRARP</name>
<dbReference type="EMBL" id="FJ171724">
    <property type="protein sequence ID" value="ACN38308.1"/>
    <property type="molecule type" value="mRNA"/>
</dbReference>
<dbReference type="EMBL" id="CM001640">
    <property type="status" value="NOT_ANNOTATED_CDS"/>
    <property type="molecule type" value="Genomic_DNA"/>
</dbReference>
<dbReference type="SMR" id="C7SFP6"/>
<dbReference type="FunCoup" id="C7SFP6">
    <property type="interactions" value="3"/>
</dbReference>
<dbReference type="STRING" id="51351.C7SFP6"/>
<dbReference type="eggNOG" id="ENOG502S4R4">
    <property type="taxonomic scope" value="Eukaryota"/>
</dbReference>
<dbReference type="InParanoid" id="C7SFP6"/>
<dbReference type="GO" id="GO:0005783">
    <property type="term" value="C:endoplasmic reticulum"/>
    <property type="evidence" value="ECO:0007669"/>
    <property type="project" value="UniProtKB-SubCell"/>
</dbReference>
<dbReference type="GO" id="GO:0016020">
    <property type="term" value="C:membrane"/>
    <property type="evidence" value="ECO:0007669"/>
    <property type="project" value="UniProtKB-SubCell"/>
</dbReference>
<dbReference type="GO" id="GO:0005634">
    <property type="term" value="C:nucleus"/>
    <property type="evidence" value="ECO:0007669"/>
    <property type="project" value="UniProtKB-SubCell"/>
</dbReference>
<dbReference type="GO" id="GO:0071365">
    <property type="term" value="P:cellular response to auxin stimulus"/>
    <property type="evidence" value="ECO:0000270"/>
    <property type="project" value="UniProtKB"/>
</dbReference>
<dbReference type="GO" id="GO:0008284">
    <property type="term" value="P:positive regulation of cell population proliferation"/>
    <property type="evidence" value="ECO:0000314"/>
    <property type="project" value="UniProtKB"/>
</dbReference>
<dbReference type="GO" id="GO:0046622">
    <property type="term" value="P:positive regulation of organ growth"/>
    <property type="evidence" value="ECO:0007669"/>
    <property type="project" value="InterPro"/>
</dbReference>
<dbReference type="InterPro" id="IPR037468">
    <property type="entry name" value="ARGOS/ARL/OSR1"/>
</dbReference>
<dbReference type="PANTHER" id="PTHR36023">
    <property type="entry name" value="ARGOS-LIKE PROTEIN"/>
    <property type="match status" value="1"/>
</dbReference>
<dbReference type="PANTHER" id="PTHR36023:SF16">
    <property type="entry name" value="PROTEIN AUXIN-REGULATED GENE INVOLVED IN ORGAN SIZE"/>
    <property type="match status" value="1"/>
</dbReference>
<sequence>MIRKTPNLQNDIINIQERYSNNLVMDVGGGRNSRKNVNFRRPPPAMTSENSKHELRRTFSSQKRLMIPANYFSLESLVILVGLTASLLILPLVLPPLPPPPFMLLLVPIGIMVLLIILAFMPSSSSRAKDVTRTFM</sequence>
<feature type="chain" id="PRO_0000423597" description="Protein AUXIN-REGULATED GENE INVOLVED IN ORGAN SIZE">
    <location>
        <begin position="1"/>
        <end position="136"/>
    </location>
</feature>
<feature type="transmembrane region" description="Helical" evidence="3">
    <location>
        <begin position="77"/>
        <end position="97"/>
    </location>
</feature>
<feature type="transmembrane region" description="Helical" evidence="3">
    <location>
        <begin position="101"/>
        <end position="121"/>
    </location>
</feature>
<feature type="region of interest" description="Organ Size Related (OSR) domain" evidence="1">
    <location>
        <begin position="72"/>
        <end position="123"/>
    </location>
</feature>
<feature type="sequence conflict" description="In Ref. 1; ACN38308." evidence="5" ref="1">
    <original>I</original>
    <variation>F</variation>
    <location>
        <position position="117"/>
    </location>
</feature>
<feature type="sequence conflict" description="In Ref. 1; ACN38308." evidence="5" ref="1">
    <original>R</original>
    <variation>P</variation>
    <location>
        <position position="133"/>
    </location>
</feature>
<gene>
    <name type="primary">ARGOS</name>
    <name type="ORF">Bra003394</name>
</gene>
<comment type="function">
    <text evidence="4">Promotes cell proliferation-dependent organ growth.</text>
</comment>
<comment type="subcellular location">
    <subcellularLocation>
        <location evidence="2">Membrane</location>
        <topology evidence="3">Multi-pass membrane protein</topology>
    </subcellularLocation>
    <subcellularLocation>
        <location evidence="2">Nucleus</location>
    </subcellularLocation>
    <subcellularLocation>
        <location evidence="2">Cytoplasm</location>
    </subcellularLocation>
    <subcellularLocation>
        <location evidence="2">Endoplasmic reticulum</location>
    </subcellularLocation>
</comment>
<comment type="tissue specificity">
    <text evidence="4">Mostly expressed in cotyledons and young siliques and, at low levels, in roots, rosette leaves, leaves, inflorescence stems and flowers.</text>
</comment>
<comment type="induction">
    <text evidence="4">By auxin (e.g. NAA).</text>
</comment>
<comment type="domain">
    <text evidence="1">The OSR domain is sufficient to promote organ growth.</text>
</comment>
<comment type="similarity">
    <text evidence="5">Belongs to the plant organ size related (OSR) protein family.</text>
</comment>
<comment type="sequence caution" evidence="5">
    <conflict type="erroneous initiation">
        <sequence resource="EMBL" id="CM001640"/>
    </conflict>
    <text>Truncated N-terminus.</text>
</comment>
<reference key="1">
    <citation type="journal article" date="2010" name="Transgenic Res.">
        <title>Ectopic expression of a Chinese cabbage BrARGOS gene in Arabidopsis increases organ size.</title>
        <authorList>
            <person name="Wang B."/>
            <person name="Zhou X."/>
            <person name="Xu F."/>
            <person name="Gao J."/>
        </authorList>
    </citation>
    <scope>NUCLEOTIDE SEQUENCE [MRNA]</scope>
    <scope>FUNCTION</scope>
    <scope>TISSUE SPECIFICITY</scope>
    <scope>INDUCTION BY AUXIN</scope>
    <source>
        <strain>cv. Fushanbaotou</strain>
    </source>
</reference>
<reference key="2">
    <citation type="journal article" date="2011" name="Nat. Genet.">
        <title>The genome of the mesopolyploid crop species Brassica rapa.</title>
        <authorList>
            <consortium name="Brassica rapa Genome Sequencing Project Consortium"/>
            <person name="Wang X."/>
            <person name="Wang H."/>
            <person name="Wang J."/>
            <person name="Sun R."/>
            <person name="Wu J."/>
            <person name="Liu S."/>
            <person name="Bai Y."/>
            <person name="Mun J.H."/>
            <person name="Bancroft I."/>
            <person name="Cheng F."/>
            <person name="Huang S."/>
            <person name="Li X."/>
            <person name="Hua W."/>
            <person name="Wang J."/>
            <person name="Wang X."/>
            <person name="Freeling M."/>
            <person name="Pires J.C."/>
            <person name="Paterson A.H."/>
            <person name="Chalhoub B."/>
            <person name="Wang B."/>
            <person name="Hayward A."/>
            <person name="Sharpe A.G."/>
            <person name="Park B.S."/>
            <person name="Weisshaar B."/>
            <person name="Liu B."/>
            <person name="Li B."/>
            <person name="Liu B."/>
            <person name="Tong C."/>
            <person name="Song C."/>
            <person name="Duran C."/>
            <person name="Peng C."/>
            <person name="Geng C."/>
            <person name="Koh C."/>
            <person name="Lin C."/>
            <person name="Edwards D."/>
            <person name="Mu D."/>
            <person name="Shen D."/>
            <person name="Soumpourou E."/>
            <person name="Li F."/>
            <person name="Fraser F."/>
            <person name="Conant G."/>
            <person name="Lassalle G."/>
            <person name="King G.J."/>
            <person name="Bonnema G."/>
            <person name="Tang H."/>
            <person name="Wang H."/>
            <person name="Belcram H."/>
            <person name="Zhou H."/>
            <person name="Hirakawa H."/>
            <person name="Abe H."/>
            <person name="Guo H."/>
            <person name="Wang H."/>
            <person name="Jin H."/>
            <person name="Parkin I.A."/>
            <person name="Batley J."/>
            <person name="Kim J.S."/>
            <person name="Just J."/>
            <person name="Li J."/>
            <person name="Xu J."/>
            <person name="Deng J."/>
            <person name="Kim J.A."/>
            <person name="Li J."/>
            <person name="Yu J."/>
            <person name="Meng J."/>
            <person name="Wang J."/>
            <person name="Min J."/>
            <person name="Poulain J."/>
            <person name="Wang J."/>
            <person name="Hatakeyama K."/>
            <person name="Wu K."/>
            <person name="Wang L."/>
            <person name="Fang L."/>
            <person name="Trick M."/>
            <person name="Links M.G."/>
            <person name="Zhao M."/>
            <person name="Jin M."/>
            <person name="Ramchiary N."/>
            <person name="Drou N."/>
            <person name="Berkman P.J."/>
            <person name="Cai Q."/>
            <person name="Huang Q."/>
            <person name="Li R."/>
            <person name="Tabata S."/>
            <person name="Cheng S."/>
            <person name="Zhang S."/>
            <person name="Zhang S."/>
            <person name="Huang S."/>
            <person name="Sato S."/>
            <person name="Sun S."/>
            <person name="Kwon S.J."/>
            <person name="Choi S.R."/>
            <person name="Lee T.H."/>
            <person name="Fan W."/>
            <person name="Zhao X."/>
            <person name="Tan X."/>
            <person name="Xu X."/>
            <person name="Wang Y."/>
            <person name="Qiu Y."/>
            <person name="Yin Y."/>
            <person name="Li Y."/>
            <person name="Du Y."/>
            <person name="Liao Y."/>
            <person name="Lim Y."/>
            <person name="Narusaka Y."/>
            <person name="Wang Y."/>
            <person name="Wang Z."/>
            <person name="Li Z."/>
            <person name="Wang Z."/>
            <person name="Xiong Z."/>
            <person name="Zhang Z."/>
        </authorList>
    </citation>
    <scope>NUCLEOTIDE SEQUENCE [LARGE SCALE GENOMIC DNA]</scope>
    <source>
        <strain>cv. Chiifu-401-42</strain>
    </source>
</reference>
<reference key="3">
    <citation type="submission" date="2013-03" db="UniProtKB">
        <authorList>
            <consortium name="EnsemblPlants"/>
        </authorList>
    </citation>
    <scope>IDENTIFICATION</scope>
    <source>
        <strain>cv. Chiifu-401-42</strain>
    </source>
</reference>
<organism>
    <name type="scientific">Brassica rapa subsp. pekinensis</name>
    <name type="common">Chinese cabbage</name>
    <name type="synonym">Brassica pekinensis</name>
    <dbReference type="NCBI Taxonomy" id="51351"/>
    <lineage>
        <taxon>Eukaryota</taxon>
        <taxon>Viridiplantae</taxon>
        <taxon>Streptophyta</taxon>
        <taxon>Embryophyta</taxon>
        <taxon>Tracheophyta</taxon>
        <taxon>Spermatophyta</taxon>
        <taxon>Magnoliopsida</taxon>
        <taxon>eudicotyledons</taxon>
        <taxon>Gunneridae</taxon>
        <taxon>Pentapetalae</taxon>
        <taxon>rosids</taxon>
        <taxon>malvids</taxon>
        <taxon>Brassicales</taxon>
        <taxon>Brassicaceae</taxon>
        <taxon>Brassiceae</taxon>
        <taxon>Brassica</taxon>
    </lineage>
</organism>